<reference key="1">
    <citation type="journal article" date="1996" name="Arch. Virol.">
        <title>The complete nucleotide sequence and genome organization of barley mild mosaic virus (Na1 strain).</title>
        <authorList>
            <person name="Kashiwazaki S."/>
        </authorList>
    </citation>
    <scope>NUCLEOTIDE SEQUENCE [GENOMIC RNA]</scope>
</reference>
<sequence length="2258" mass="256357">MEEFIPEVFYQNQVQSLKKILKSWKRDTSIYAYLAREQEVLAFLVLSPAHIAKLNKLLTEESARCALLAQNCETIEALAVVRQALQGVTLHFGDNGMEKGWLHMMKALDACLDESFSENAAALKKSIQAVGHKLIAAKNRIESCERSVNHLTTFQFAREYGLSTTYFEKLSNFGGHIRSFVWSSDSGEIFPKPKRSSRTKRISTFTSYYWGEFWCNCIWLLCSLWSPARWCFNSVVFIWSLCGVLNLSMVVLQFTLKRHFGRYYFRYVMSGVLAICAVCCVHLKNRKGPILQASQKDKRFIGILAFCITVIYMFDVDLADSLSNNLHKISRLVNLFLDDNRGFATPALDNLTDFTTILQSGTSSDDLKIVQDTLAVVLQVDDEDATQDDAIYDSDGLQTFKQWVSHNQLAGMQLARPLQYPCSTTYGLTADNVAELATSMAQEAKQWSQVVGHTGSGKSTRLPTAYANCLKGLAGRKKNVLVCEPTRAATVNVTSGISQNFGRLVYGRHEGWSNLGDKTIQVMTYGSALAAWKVDNKFLSQFDAVFLDESHLITTHALVFESICQEVTNVRKFYVSATPRDGKKCPEAVRRYEIKTVKSECSSVDTFVRSQDKENSLYVLQHETVLVFLAGKAECDRAASNWNKLYSTNMYAYSLTGDNFTVAYENIVTRMLTDRIIVFCTNILETGVTLNVDCVVDFGFTMRPELDLVDKSLTLMRRRVTENERAQRIGRAGRLRTGHAICIGNPETRHDLVPPETLYEAALLSFVHGVQFYINEHFENAWIEGVTKSQASVMTQFKLSPFLMRDIVRDDGAIPLSLHKILKNYTHRNTDLIGTKLSVMSHVYNSWPLYRTVHQSIFRGDSNVPQALKHARVPFNVSTAHDFPWENFAQACLEFQPRVLQVFSDSSSTSRIINLQIGKMHIVNSMEEVKININSYQRSAENLRSVKDSFESSIFRTKLLRGNPTGKITKRIETLLDNVRVLQQVHAKLEIIAYSGGEKLNMDKKSVDELNEIVELQSKNSLTAEELARILHLTKPTSTFFNLFAERGRQMLVTLLVMVAASLMYLVFWVSPRKQDDITIEGKGRAYNRDKRMGYDSYEEDEVRHKINKKFKERSTRFSNDSKPETSSKYRNLKQEFVNFYDLKTDANVLQAVFTAMDGAVLLQTEAPMADIDRVNRLLNDHFEDSESQAAHEGLNTMVKCHLTMKDGRQFELDMEQHDPETIAKLGGEVGFRMNRYDLRQVGATRYINPKAQTSAATLEGMTMKPMSAFTIDSAKMVGFIKTAKDTLNCILYGDWIIAPAHIQQGEGDITFIFQHTQFTTTTERLASYGIRQFKGLDLVVIRRPQQIRAVKKDMRASILDTPTEVQMLYLSTKGGKYQVSTSAVCFPHYNNRWGHVISTAEGMCGCIVFNPTTNHIVGIHVSYNDTRRRNEFQAFTSDVLTTINAPGHEIPFSPWVFDWKFCGYTTKPRNMQSAPSTLERLNINATGFGFKLNAQGIKPAMLRSTETFSREFPNTQFKLIGEVKKGLIDKHTITGENPYFLEFLNTFKPYQWVQAFMDEYAPSILAYDAYFKDLKKYDRPPHASVFCEDTLTKAKHKMIKILEEAGMGRTLVRTTEQVLLDMAWTTSGGPLYHGKKIDIVQHLSDDELVQFSEACQQALITGTLDGVWNGSLKAELRSSQKILERKTRVFTAAPITSLIAMKYYVDDFNKQFYKTHLKAPHTVGINKFNRGWQNLYEKLNKPGWTHGSGDGSRFDSSIDGFLFDVIKDIRKHFMDAEHHKQLDTIYEEIVNTKICLANGLVIQKNCGNNSGQPSTVVDNTLALMTSFLYAYARLTGDDTFELMDENFVFVCNGDDNKFAMSPSFMVKFGCDFSPFLSELGLTYEFDEATEDICENPYMSLTMVRTSFGIGFSLSIERIVAILQWSRAGGVLHAYLSGIAALFESFNTPKLFNLVHTYLLWLVTEHEEELFSMMELKDMFMPLPTKEQIALLHYVGTEPIMEETYLQSGKDDPDPIVPPVSDTDLTNMAAAPPDNRRSRAVVPRGTSDWNLPEPKMRMLGFKSKINIETLADVPEGYMNTFASVATETQRRKWEEATRGDFGITDNEKWEKLLIAACIYFADNGTSPNFDEELTMEVNGGLNSIKEYPVRPFVVRAKKISTLRRIFRCYSIETKLMFVKLRRVPQWAIKHGCLDEIVFDFMIPDQFTSRTALETLKQTKLAAIGVGTSNSLLTSEQTNMRTTETRRRNDYDGHEALLR</sequence>
<organism>
    <name type="scientific">Barley mild mosaic virus (strain Na1)</name>
    <name type="common">BaMMV</name>
    <dbReference type="NCBI Taxonomy" id="103900"/>
    <lineage>
        <taxon>Viruses</taxon>
        <taxon>Riboviria</taxon>
        <taxon>Orthornavirae</taxon>
        <taxon>Pisuviricota</taxon>
        <taxon>Stelpaviricetes</taxon>
        <taxon>Patatavirales</taxon>
        <taxon>Potyviridae</taxon>
        <taxon>Bymovirus</taxon>
        <taxon>Barley mild mosaic virus</taxon>
    </lineage>
</organism>
<organismHost>
    <name type="scientific">Hordeum vulgare</name>
    <name type="common">Barley</name>
    <dbReference type="NCBI Taxonomy" id="4513"/>
</organismHost>
<feature type="chain" id="PRO_0000456242" description="Genome polyprotein 1">
    <location>
        <begin position="1"/>
        <end position="2258"/>
    </location>
</feature>
<feature type="chain" id="PRO_0000040530" description="Protein P3" evidence="5">
    <location>
        <begin position="1"/>
        <end position="292"/>
    </location>
</feature>
<feature type="chain" id="PRO_0000040531" description="6 kDa protein 1" evidence="5">
    <location>
        <begin position="293"/>
        <end position="359"/>
    </location>
</feature>
<feature type="chain" id="PRO_0000040532" description="Cytoplasmic inclusion protein" evidence="5">
    <location>
        <begin position="360"/>
        <end position="1017"/>
    </location>
</feature>
<feature type="chain" id="PRO_0000040533" description="6 kDa protein 2" evidence="5">
    <location>
        <begin position="1018"/>
        <end position="1081"/>
    </location>
</feature>
<feature type="chain" id="PRO_0000040534" description="Viral genome-linked protein" evidence="5">
    <location>
        <begin position="1082"/>
        <end position="1256"/>
    </location>
</feature>
<feature type="chain" id="PRO_0000040535" description="Nuclear inclusion protein A" evidence="5">
    <location>
        <begin position="1257"/>
        <end position="1496"/>
    </location>
</feature>
<feature type="chain" id="PRO_0000040536" description="Nuclear inclusion protein B" evidence="5">
    <location>
        <begin position="1497"/>
        <end position="2007"/>
    </location>
</feature>
<feature type="chain" id="PRO_0000040537" description="Coat protein" evidence="5">
    <location>
        <begin position="2008"/>
        <end position="2258"/>
    </location>
</feature>
<feature type="domain" description="Helicase ATP-binding" evidence="7">
    <location>
        <begin position="439"/>
        <end position="597"/>
    </location>
</feature>
<feature type="domain" description="Helicase C-terminal" evidence="8">
    <location>
        <begin position="612"/>
        <end position="778"/>
    </location>
</feature>
<feature type="domain" description="Peptidase C4" evidence="9">
    <location>
        <begin position="1257"/>
        <end position="1476"/>
    </location>
</feature>
<feature type="domain" description="RdRp catalytic" evidence="6">
    <location>
        <begin position="1745"/>
        <end position="1869"/>
    </location>
</feature>
<feature type="region of interest" description="Disordered" evidence="10">
    <location>
        <begin position="2027"/>
        <end position="2047"/>
    </location>
</feature>
<feature type="region of interest" description="Disordered" evidence="10">
    <location>
        <begin position="2233"/>
        <end position="2258"/>
    </location>
</feature>
<feature type="compositionally biased region" description="Basic and acidic residues" evidence="10">
    <location>
        <begin position="2242"/>
        <end position="2258"/>
    </location>
</feature>
<feature type="active site" description="For nuclear inclusion protein A activity" evidence="9">
    <location>
        <position position="1302"/>
    </location>
</feature>
<feature type="active site" description="For nuclear inclusion protein A activity" evidence="9">
    <location>
        <position position="1338"/>
    </location>
</feature>
<feature type="active site" description="For nuclear inclusion protein A activity" evidence="9">
    <location>
        <position position="1405"/>
    </location>
</feature>
<feature type="binding site" evidence="7">
    <location>
        <begin position="487"/>
        <end position="494"/>
    </location>
    <ligand>
        <name>ATP</name>
        <dbReference type="ChEBI" id="CHEBI:30616"/>
    </ligand>
</feature>
<feature type="site" description="Cleavage" evidence="5">
    <location>
        <begin position="292"/>
        <end position="293"/>
    </location>
</feature>
<feature type="site" description="Cleavage" evidence="5">
    <location>
        <begin position="359"/>
        <end position="360"/>
    </location>
</feature>
<feature type="site" description="Cleavage" evidence="5">
    <location>
        <begin position="1017"/>
        <end position="1018"/>
    </location>
</feature>
<feature type="site" description="Cleavage" evidence="5">
    <location>
        <begin position="1081"/>
        <end position="1082"/>
    </location>
</feature>
<feature type="site" description="Cleavage" evidence="5">
    <location>
        <begin position="1256"/>
        <end position="1257"/>
    </location>
</feature>
<feature type="site" description="Cleavage" evidence="5">
    <location>
        <begin position="1496"/>
        <end position="1497"/>
    </location>
</feature>
<feature type="site" description="Cleavage" evidence="5">
    <location>
        <begin position="2007"/>
        <end position="2008"/>
    </location>
</feature>
<feature type="modified residue" description="O-(5'-phospho-RNA)-tyrosine" evidence="2">
    <location>
        <position position="1141"/>
    </location>
</feature>
<keyword id="KW-0067">ATP-binding</keyword>
<keyword id="KW-0167">Capsid protein</keyword>
<keyword id="KW-0191">Covalent protein-RNA linkage</keyword>
<keyword id="KW-1139">Helical capsid protein</keyword>
<keyword id="KW-0347">Helicase</keyword>
<keyword id="KW-1036">Host cytoplasmic vesicle</keyword>
<keyword id="KW-0378">Hydrolase</keyword>
<keyword id="KW-0547">Nucleotide-binding</keyword>
<keyword id="KW-0548">Nucleotidyltransferase</keyword>
<keyword id="KW-0597">Phosphoprotein</keyword>
<keyword id="KW-0696">RNA-directed RNA polymerase</keyword>
<keyword id="KW-0808">Transferase</keyword>
<keyword id="KW-0693">Viral RNA replication</keyword>
<keyword id="KW-0946">Virion</keyword>
<protein>
    <recommendedName>
        <fullName>Genome polyprotein 1</fullName>
    </recommendedName>
    <component>
        <recommendedName>
            <fullName>Protein P3</fullName>
        </recommendedName>
    </component>
    <component>
        <recommendedName>
            <fullName>6 kDa protein 1</fullName>
            <shortName>6K1</shortName>
        </recommendedName>
    </component>
    <component>
        <recommendedName>
            <fullName>Cytoplasmic inclusion protein</fullName>
            <shortName>CI</shortName>
            <ecNumber>3.6.4.-</ecNumber>
        </recommendedName>
    </component>
    <component>
        <recommendedName>
            <fullName>6 kDa protein 2</fullName>
            <shortName>6K2</shortName>
        </recommendedName>
    </component>
    <component>
        <recommendedName>
            <fullName>Viral genome-linked protein</fullName>
        </recommendedName>
        <alternativeName>
            <fullName>VPg</fullName>
        </alternativeName>
    </component>
    <component>
        <recommendedName>
            <fullName>Nuclear inclusion protein A</fullName>
            <shortName>NI-a</shortName>
            <shortName>NIa</shortName>
            <ecNumber>3.4.22.44</ecNumber>
        </recommendedName>
        <alternativeName>
            <fullName>NIa-pro</fullName>
        </alternativeName>
    </component>
    <component>
        <recommendedName>
            <fullName>Nuclear inclusion protein B</fullName>
            <shortName>NI-b</shortName>
            <shortName>NIb</shortName>
            <ecNumber>2.7.7.48</ecNumber>
        </recommendedName>
        <alternativeName>
            <fullName>RNA-directed RNA polymerase</fullName>
        </alternativeName>
    </component>
    <component>
        <recommendedName>
            <fullName>Coat protein</fullName>
            <shortName>CP</shortName>
        </recommendedName>
    </component>
</protein>
<accession>P90245</accession>
<dbReference type="EC" id="3.6.4.-"/>
<dbReference type="EC" id="3.4.22.44"/>
<dbReference type="EC" id="2.7.7.48"/>
<dbReference type="EMBL" id="D83408">
    <property type="protein sequence ID" value="BAA18953.1"/>
    <property type="molecule type" value="Genomic_RNA"/>
</dbReference>
<dbReference type="Proteomes" id="UP000007444">
    <property type="component" value="Genome"/>
</dbReference>
<dbReference type="GO" id="GO:0019029">
    <property type="term" value="C:helical viral capsid"/>
    <property type="evidence" value="ECO:0007669"/>
    <property type="project" value="UniProtKB-KW"/>
</dbReference>
<dbReference type="GO" id="GO:0044161">
    <property type="term" value="C:host cell cytoplasmic vesicle"/>
    <property type="evidence" value="ECO:0007669"/>
    <property type="project" value="UniProtKB-SubCell"/>
</dbReference>
<dbReference type="GO" id="GO:0005524">
    <property type="term" value="F:ATP binding"/>
    <property type="evidence" value="ECO:0007669"/>
    <property type="project" value="UniProtKB-KW"/>
</dbReference>
<dbReference type="GO" id="GO:0008234">
    <property type="term" value="F:cysteine-type peptidase activity"/>
    <property type="evidence" value="ECO:0007669"/>
    <property type="project" value="InterPro"/>
</dbReference>
<dbReference type="GO" id="GO:0004386">
    <property type="term" value="F:helicase activity"/>
    <property type="evidence" value="ECO:0007669"/>
    <property type="project" value="UniProtKB-KW"/>
</dbReference>
<dbReference type="GO" id="GO:0016818">
    <property type="term" value="F:hydrolase activity, acting on acid anhydrides, in phosphorus-containing anhydrides"/>
    <property type="evidence" value="ECO:0007669"/>
    <property type="project" value="InterPro"/>
</dbReference>
<dbReference type="GO" id="GO:0003723">
    <property type="term" value="F:RNA binding"/>
    <property type="evidence" value="ECO:0007669"/>
    <property type="project" value="InterPro"/>
</dbReference>
<dbReference type="GO" id="GO:0003968">
    <property type="term" value="F:RNA-directed RNA polymerase activity"/>
    <property type="evidence" value="ECO:0007669"/>
    <property type="project" value="UniProtKB-KW"/>
</dbReference>
<dbReference type="GO" id="GO:0005198">
    <property type="term" value="F:structural molecule activity"/>
    <property type="evidence" value="ECO:0007669"/>
    <property type="project" value="InterPro"/>
</dbReference>
<dbReference type="GO" id="GO:0006351">
    <property type="term" value="P:DNA-templated transcription"/>
    <property type="evidence" value="ECO:0007669"/>
    <property type="project" value="InterPro"/>
</dbReference>
<dbReference type="GO" id="GO:0006508">
    <property type="term" value="P:proteolysis"/>
    <property type="evidence" value="ECO:0007669"/>
    <property type="project" value="InterPro"/>
</dbReference>
<dbReference type="GO" id="GO:0039694">
    <property type="term" value="P:viral RNA genome replication"/>
    <property type="evidence" value="ECO:0007669"/>
    <property type="project" value="InterPro"/>
</dbReference>
<dbReference type="CDD" id="cd23175">
    <property type="entry name" value="ps-ssRNAv_Potyviridae_RdRp"/>
    <property type="match status" value="1"/>
</dbReference>
<dbReference type="Gene3D" id="3.30.70.270">
    <property type="match status" value="1"/>
</dbReference>
<dbReference type="Gene3D" id="3.40.50.300">
    <property type="entry name" value="P-loop containing nucleotide triphosphate hydrolases"/>
    <property type="match status" value="2"/>
</dbReference>
<dbReference type="Gene3D" id="2.40.10.10">
    <property type="entry name" value="Trypsin-like serine proteases"/>
    <property type="match status" value="1"/>
</dbReference>
<dbReference type="InterPro" id="IPR011545">
    <property type="entry name" value="DEAD/DEAH_box_helicase_dom"/>
</dbReference>
<dbReference type="InterPro" id="IPR043502">
    <property type="entry name" value="DNA/RNA_pol_sf"/>
</dbReference>
<dbReference type="InterPro" id="IPR014001">
    <property type="entry name" value="Helicase_ATP-bd"/>
</dbReference>
<dbReference type="InterPro" id="IPR001650">
    <property type="entry name" value="Helicase_C-like"/>
</dbReference>
<dbReference type="InterPro" id="IPR027417">
    <property type="entry name" value="P-loop_NTPase"/>
</dbReference>
<dbReference type="InterPro" id="IPR009003">
    <property type="entry name" value="Peptidase_S1_PA"/>
</dbReference>
<dbReference type="InterPro" id="IPR043504">
    <property type="entry name" value="Peptidase_S1_PA_chymotrypsin"/>
</dbReference>
<dbReference type="InterPro" id="IPR001592">
    <property type="entry name" value="Poty_coat"/>
</dbReference>
<dbReference type="InterPro" id="IPR001730">
    <property type="entry name" value="Potyv_NIa-pro_dom"/>
</dbReference>
<dbReference type="InterPro" id="IPR013648">
    <property type="entry name" value="PP_Potyviridae"/>
</dbReference>
<dbReference type="InterPro" id="IPR043128">
    <property type="entry name" value="Rev_trsase/Diguanyl_cyclase"/>
</dbReference>
<dbReference type="InterPro" id="IPR001205">
    <property type="entry name" value="RNA-dir_pol_C"/>
</dbReference>
<dbReference type="InterPro" id="IPR007094">
    <property type="entry name" value="RNA-dir_pol_PSvirus"/>
</dbReference>
<dbReference type="PANTHER" id="PTHR43519">
    <property type="entry name" value="ATP-DEPENDENT RNA HELICASE HRPB"/>
    <property type="match status" value="1"/>
</dbReference>
<dbReference type="PANTHER" id="PTHR43519:SF1">
    <property type="entry name" value="ATP-DEPENDENT RNA HELICASE HRPB"/>
    <property type="match status" value="1"/>
</dbReference>
<dbReference type="Pfam" id="PF00270">
    <property type="entry name" value="DEAD"/>
    <property type="match status" value="1"/>
</dbReference>
<dbReference type="Pfam" id="PF00271">
    <property type="entry name" value="Helicase_C"/>
    <property type="match status" value="1"/>
</dbReference>
<dbReference type="Pfam" id="PF00863">
    <property type="entry name" value="Peptidase_C4"/>
    <property type="match status" value="1"/>
</dbReference>
<dbReference type="Pfam" id="PF00767">
    <property type="entry name" value="Poty_coat"/>
    <property type="match status" value="1"/>
</dbReference>
<dbReference type="Pfam" id="PF08440">
    <property type="entry name" value="Poty_PP"/>
    <property type="match status" value="1"/>
</dbReference>
<dbReference type="Pfam" id="PF00680">
    <property type="entry name" value="RdRP_1"/>
    <property type="match status" value="1"/>
</dbReference>
<dbReference type="PRINTS" id="PR00966">
    <property type="entry name" value="NIAPOTYPTASE"/>
</dbReference>
<dbReference type="SMART" id="SM00487">
    <property type="entry name" value="DEXDc"/>
    <property type="match status" value="1"/>
</dbReference>
<dbReference type="SMART" id="SM00490">
    <property type="entry name" value="HELICc"/>
    <property type="match status" value="1"/>
</dbReference>
<dbReference type="SUPFAM" id="SSF56672">
    <property type="entry name" value="DNA/RNA polymerases"/>
    <property type="match status" value="1"/>
</dbReference>
<dbReference type="SUPFAM" id="SSF52540">
    <property type="entry name" value="P-loop containing nucleoside triphosphate hydrolases"/>
    <property type="match status" value="1"/>
</dbReference>
<dbReference type="SUPFAM" id="SSF50494">
    <property type="entry name" value="Trypsin-like serine proteases"/>
    <property type="match status" value="1"/>
</dbReference>
<dbReference type="PROSITE" id="PS51192">
    <property type="entry name" value="HELICASE_ATP_BIND_1"/>
    <property type="match status" value="1"/>
</dbReference>
<dbReference type="PROSITE" id="PS51194">
    <property type="entry name" value="HELICASE_CTER"/>
    <property type="match status" value="1"/>
</dbReference>
<dbReference type="PROSITE" id="PS51436">
    <property type="entry name" value="POTYVIRUS_NIA_PRO"/>
    <property type="match status" value="1"/>
</dbReference>
<dbReference type="PROSITE" id="PS50507">
    <property type="entry name" value="RDRP_SSRNA_POS"/>
    <property type="match status" value="1"/>
</dbReference>
<evidence type="ECO:0000250" key="1">
    <source>
        <dbReference type="UniProtKB" id="P04517"/>
    </source>
</evidence>
<evidence type="ECO:0000250" key="2">
    <source>
        <dbReference type="UniProtKB" id="P09814"/>
    </source>
</evidence>
<evidence type="ECO:0000250" key="3">
    <source>
        <dbReference type="UniProtKB" id="P13529"/>
    </source>
</evidence>
<evidence type="ECO:0000250" key="4">
    <source>
        <dbReference type="UniProtKB" id="P18247"/>
    </source>
</evidence>
<evidence type="ECO:0000255" key="5"/>
<evidence type="ECO:0000255" key="6">
    <source>
        <dbReference type="PROSITE-ProRule" id="PRU00539"/>
    </source>
</evidence>
<evidence type="ECO:0000255" key="7">
    <source>
        <dbReference type="PROSITE-ProRule" id="PRU00541"/>
    </source>
</evidence>
<evidence type="ECO:0000255" key="8">
    <source>
        <dbReference type="PROSITE-ProRule" id="PRU00542"/>
    </source>
</evidence>
<evidence type="ECO:0000255" key="9">
    <source>
        <dbReference type="PROSITE-ProRule" id="PRU00766"/>
    </source>
</evidence>
<evidence type="ECO:0000256" key="10">
    <source>
        <dbReference type="SAM" id="MobiDB-lite"/>
    </source>
</evidence>
<evidence type="ECO:0000305" key="11"/>
<comment type="function">
    <molecule>6 kDa protein 1</molecule>
    <text evidence="3">Indispensable for virus replication.</text>
</comment>
<comment type="function">
    <molecule>6 kDa protein 2</molecule>
    <text evidence="2">Indispensable for virus replication.</text>
</comment>
<comment type="function">
    <molecule>Viral genome-linked protein</molecule>
    <text evidence="4">Mediates the cap-independent, EIF4E-dependent translation of viral genomic RNAs (By similarity). Binds to the cap-binding site of host EIF4E and thus interferes with the host EIF4E-dependent mRNA export and translation (By similarity). VPg-RNA directly binds EIF4E and is a template for transcription (By similarity). Also forms trimeric complexes with EIF4E-EIF4G, which are templates for translation (By similarity).</text>
</comment>
<comment type="function">
    <molecule>Nuclear inclusion protein A</molecule>
    <text evidence="1">Has RNA-binding and proteolytic activities.</text>
</comment>
<comment type="function">
    <molecule>Nuclear inclusion protein B</molecule>
    <text>An RNA-dependent RNA polymerase that plays an essential role in the virus replication.</text>
</comment>
<comment type="catalytic activity">
    <reaction evidence="6">
        <text>RNA(n) + a ribonucleoside 5'-triphosphate = RNA(n+1) + diphosphate</text>
        <dbReference type="Rhea" id="RHEA:21248"/>
        <dbReference type="Rhea" id="RHEA-COMP:14527"/>
        <dbReference type="Rhea" id="RHEA-COMP:17342"/>
        <dbReference type="ChEBI" id="CHEBI:33019"/>
        <dbReference type="ChEBI" id="CHEBI:61557"/>
        <dbReference type="ChEBI" id="CHEBI:140395"/>
        <dbReference type="EC" id="2.7.7.48"/>
    </reaction>
</comment>
<comment type="catalytic activity">
    <reaction evidence="1">
        <text>Hydrolyzes glutaminyl bonds, and activity is further restricted by preferences for the amino acids in P6 - P1' that vary with the species of potyvirus, e.g. Glu-Xaa-Xaa-Tyr-Xaa-Gln-|-(Ser or Gly) for the enzyme from tobacco etch virus. The natural substrate is the viral polyprotein, but other proteins and oligopeptides containing the appropriate consensus sequence are also cleaved.</text>
        <dbReference type="EC" id="3.4.22.44"/>
    </reaction>
</comment>
<comment type="subcellular location">
    <molecule>6 kDa protein 1</molecule>
    <subcellularLocation>
        <location>Host cytoplasmic vesicle</location>
    </subcellularLocation>
    <text evidence="3">Probably colocalizes with 6K2-induced vesicles associated with host chloroplasts.</text>
</comment>
<comment type="subcellular location">
    <molecule>6 kDa protein 2</molecule>
    <subcellularLocation>
        <location evidence="2">Host cytoplasmic vesicle</location>
    </subcellularLocation>
    <text evidence="2">6K-induced vesicles associate with host chloroplasts.</text>
</comment>
<comment type="subcellular location">
    <molecule>Coat protein</molecule>
    <subcellularLocation>
        <location evidence="11">Virion</location>
    </subcellularLocation>
</comment>
<comment type="PTM">
    <molecule>Viral genome-linked protein</molecule>
    <text evidence="2">VPg is uridylylated by the polymerase and is covalently attached to the 5'-end of the genomic RNA. This uridylylated form acts as a nucleotide-peptide primer for the polymerase (By similarity).</text>
</comment>
<comment type="PTM">
    <molecule>Genome polyprotein 1</molecule>
    <text evidence="11">The viral RNA1 of bymoviruses is expressed as a single polyprotein which undergoes post-translational proteolytic processing by the main proteinase NIa-pro resulting in the production of at least eight individual proteins.</text>
</comment>
<comment type="similarity">
    <text evidence="11">Belongs to the bymoviruses polyprotein 1 family.</text>
</comment>
<proteinExistence type="inferred from homology"/>
<name>POL1_BAMMN</name>